<keyword id="KW-0408">Iron</keyword>
<keyword id="KW-0456">Lyase</keyword>
<keyword id="KW-0464">Manganese</keyword>
<organism>
    <name type="scientific">Bacteroides fragilis (strain YCH46)</name>
    <dbReference type="NCBI Taxonomy" id="295405"/>
    <lineage>
        <taxon>Bacteria</taxon>
        <taxon>Pseudomonadati</taxon>
        <taxon>Bacteroidota</taxon>
        <taxon>Bacteroidia</taxon>
        <taxon>Bacteroidales</taxon>
        <taxon>Bacteroidaceae</taxon>
        <taxon>Bacteroides</taxon>
    </lineage>
</organism>
<protein>
    <recommendedName>
        <fullName evidence="1">Mannonate dehydratase</fullName>
        <ecNumber evidence="1">4.2.1.8</ecNumber>
    </recommendedName>
    <alternativeName>
        <fullName evidence="1">D-mannonate hydro-lyase</fullName>
    </alternativeName>
</protein>
<sequence length="396" mass="45357">MTLLKDKLFLSEQTWRWYGPDDPVSLWDIKQAGATGIVNALHHIPNGEVWTVEEIMKRKELIESVGLKWSVVESVPVHEHIKTQTGNFRKYIENYKESLRNLGQCGIHIVTYNFMPVLDWTRTDLAYTLPDGSKALRFERAAFIAFDLFLLKRPGAETEYTDEEKTKARIRFEQMDEKEKQLLVRNMIAGLPGSEESFTLEQFQHELDRYRGIDAEKLRTHLIYFLKEITSTADEAGVKLVIHPDDPPCSILGLPRIMSCAEDFQALIDAVPNESNGLCLCTGSLGVSCANDLEGMMRRFGDRINFVHFRSTQRDAEGNFYEANHLEGDVDMYHVMKAFLELQQRRKVSIPMRPDHGHQMVDDLKKKTNPGYSCIGRLRGLAELRGLEMGIAKSIF</sequence>
<accession>Q650A0</accession>
<reference key="1">
    <citation type="journal article" date="2004" name="Proc. Natl. Acad. Sci. U.S.A.">
        <title>Genomic analysis of Bacteroides fragilis reveals extensive DNA inversions regulating cell surface adaptation.</title>
        <authorList>
            <person name="Kuwahara T."/>
            <person name="Yamashita A."/>
            <person name="Hirakawa H."/>
            <person name="Nakayama H."/>
            <person name="Toh H."/>
            <person name="Okada N."/>
            <person name="Kuhara S."/>
            <person name="Hattori M."/>
            <person name="Hayashi T."/>
            <person name="Ohnishi Y."/>
        </authorList>
    </citation>
    <scope>NUCLEOTIDE SEQUENCE [LARGE SCALE GENOMIC DNA]</scope>
    <source>
        <strain>YCH46</strain>
    </source>
</reference>
<dbReference type="EC" id="4.2.1.8" evidence="1"/>
<dbReference type="EMBL" id="AP006841">
    <property type="protein sequence ID" value="BAD46926.1"/>
    <property type="status" value="ALT_INIT"/>
    <property type="molecule type" value="Genomic_DNA"/>
</dbReference>
<dbReference type="RefSeq" id="WP_011201879.1">
    <property type="nucleotide sequence ID" value="NC_006347.1"/>
</dbReference>
<dbReference type="RefSeq" id="YP_097460.1">
    <property type="nucleotide sequence ID" value="NC_006347.1"/>
</dbReference>
<dbReference type="SMR" id="Q650A0"/>
<dbReference type="STRING" id="295405.BF0177"/>
<dbReference type="KEGG" id="bfr:BF0177"/>
<dbReference type="PATRIC" id="fig|295405.11.peg.209"/>
<dbReference type="HOGENOM" id="CLU_058621_2_0_10"/>
<dbReference type="OrthoDB" id="9780250at2"/>
<dbReference type="UniPathway" id="UPA00246"/>
<dbReference type="Proteomes" id="UP000002197">
    <property type="component" value="Chromosome"/>
</dbReference>
<dbReference type="GO" id="GO:0008198">
    <property type="term" value="F:ferrous iron binding"/>
    <property type="evidence" value="ECO:0007669"/>
    <property type="project" value="TreeGrafter"/>
</dbReference>
<dbReference type="GO" id="GO:0030145">
    <property type="term" value="F:manganese ion binding"/>
    <property type="evidence" value="ECO:0007669"/>
    <property type="project" value="TreeGrafter"/>
</dbReference>
<dbReference type="GO" id="GO:0008927">
    <property type="term" value="F:mannonate dehydratase activity"/>
    <property type="evidence" value="ECO:0007669"/>
    <property type="project" value="UniProtKB-UniRule"/>
</dbReference>
<dbReference type="GO" id="GO:0042840">
    <property type="term" value="P:D-glucuronate catabolic process"/>
    <property type="evidence" value="ECO:0007669"/>
    <property type="project" value="TreeGrafter"/>
</dbReference>
<dbReference type="Gene3D" id="3.20.20.150">
    <property type="entry name" value="Divalent-metal-dependent TIM barrel enzymes"/>
    <property type="match status" value="1"/>
</dbReference>
<dbReference type="HAMAP" id="MF_00106">
    <property type="entry name" value="UxuA"/>
    <property type="match status" value="1"/>
</dbReference>
<dbReference type="InterPro" id="IPR004628">
    <property type="entry name" value="Man_deHydtase"/>
</dbReference>
<dbReference type="InterPro" id="IPR036237">
    <property type="entry name" value="Xyl_isomerase-like_sf"/>
</dbReference>
<dbReference type="NCBIfam" id="NF003027">
    <property type="entry name" value="PRK03906.1"/>
    <property type="match status" value="1"/>
</dbReference>
<dbReference type="NCBIfam" id="TIGR00695">
    <property type="entry name" value="uxuA"/>
    <property type="match status" value="1"/>
</dbReference>
<dbReference type="PANTHER" id="PTHR30387">
    <property type="entry name" value="MANNONATE DEHYDRATASE"/>
    <property type="match status" value="1"/>
</dbReference>
<dbReference type="PANTHER" id="PTHR30387:SF2">
    <property type="entry name" value="MANNONATE DEHYDRATASE"/>
    <property type="match status" value="1"/>
</dbReference>
<dbReference type="Pfam" id="PF03786">
    <property type="entry name" value="UxuA"/>
    <property type="match status" value="1"/>
</dbReference>
<dbReference type="PIRSF" id="PIRSF016049">
    <property type="entry name" value="Man_dehyd"/>
    <property type="match status" value="1"/>
</dbReference>
<dbReference type="SUPFAM" id="SSF51658">
    <property type="entry name" value="Xylose isomerase-like"/>
    <property type="match status" value="1"/>
</dbReference>
<name>UXUA_BACFR</name>
<proteinExistence type="inferred from homology"/>
<comment type="function">
    <text evidence="1">Catalyzes the dehydration of D-mannonate.</text>
</comment>
<comment type="catalytic activity">
    <reaction evidence="1">
        <text>D-mannonate = 2-dehydro-3-deoxy-D-gluconate + H2O</text>
        <dbReference type="Rhea" id="RHEA:20097"/>
        <dbReference type="ChEBI" id="CHEBI:15377"/>
        <dbReference type="ChEBI" id="CHEBI:17767"/>
        <dbReference type="ChEBI" id="CHEBI:57990"/>
        <dbReference type="EC" id="4.2.1.8"/>
    </reaction>
</comment>
<comment type="cofactor">
    <cofactor evidence="1">
        <name>Fe(2+)</name>
        <dbReference type="ChEBI" id="CHEBI:29033"/>
    </cofactor>
    <cofactor evidence="1">
        <name>Mn(2+)</name>
        <dbReference type="ChEBI" id="CHEBI:29035"/>
    </cofactor>
</comment>
<comment type="pathway">
    <text evidence="1">Carbohydrate metabolism; pentose and glucuronate interconversion.</text>
</comment>
<comment type="similarity">
    <text evidence="1">Belongs to the mannonate dehydratase family.</text>
</comment>
<comment type="sequence caution" evidence="2">
    <conflict type="erroneous initiation">
        <sequence resource="EMBL-CDS" id="BAD46926"/>
    </conflict>
</comment>
<feature type="chain" id="PRO_0000231050" description="Mannonate dehydratase">
    <location>
        <begin position="1"/>
        <end position="396"/>
    </location>
</feature>
<evidence type="ECO:0000255" key="1">
    <source>
        <dbReference type="HAMAP-Rule" id="MF_00106"/>
    </source>
</evidence>
<evidence type="ECO:0000305" key="2"/>
<gene>
    <name evidence="1" type="primary">uxuA</name>
    <name type="ordered locus">BF0177</name>
</gene>